<feature type="chain" id="PRO_0000431052" description="Putative uncharacterized protein YMR294W-A">
    <location>
        <begin position="1"/>
        <end position="119"/>
    </location>
</feature>
<feature type="region of interest" description="Disordered" evidence="1">
    <location>
        <begin position="78"/>
        <end position="119"/>
    </location>
</feature>
<feature type="compositionally biased region" description="Polar residues" evidence="1">
    <location>
        <begin position="84"/>
        <end position="93"/>
    </location>
</feature>
<feature type="compositionally biased region" description="Basic residues" evidence="1">
    <location>
        <begin position="109"/>
        <end position="119"/>
    </location>
</feature>
<organism>
    <name type="scientific">Saccharomyces cerevisiae (strain ATCC 204508 / S288c)</name>
    <name type="common">Baker's yeast</name>
    <dbReference type="NCBI Taxonomy" id="559292"/>
    <lineage>
        <taxon>Eukaryota</taxon>
        <taxon>Fungi</taxon>
        <taxon>Dikarya</taxon>
        <taxon>Ascomycota</taxon>
        <taxon>Saccharomycotina</taxon>
        <taxon>Saccharomycetes</taxon>
        <taxon>Saccharomycetales</taxon>
        <taxon>Saccharomycetaceae</taxon>
        <taxon>Saccharomyces</taxon>
    </lineage>
</organism>
<accession>A0A023PZL7</accession>
<sequence length="119" mass="13839">MKYEISKIRAENRNYHKKEKNKVSKGYQALISSSFYQTIPSSSSFAFPQSVRVVVADTLLVHHTFDWKHHPLAVAYRSHRKSQQHQTQGNQVLRGTRKLESPTVGPRPGLRRQHTRNFL</sequence>
<evidence type="ECO:0000256" key="1">
    <source>
        <dbReference type="SAM" id="MobiDB-lite"/>
    </source>
</evidence>
<evidence type="ECO:0000269" key="2">
    <source>
    </source>
</evidence>
<evidence type="ECO:0000305" key="3"/>
<evidence type="ECO:0000305" key="4">
    <source>
    </source>
</evidence>
<evidence type="ECO:0000312" key="5">
    <source>
        <dbReference type="SGD" id="S000004909"/>
    </source>
</evidence>
<name>YM294_YEAST</name>
<proteinExistence type="uncertain"/>
<reference key="1">
    <citation type="journal article" date="1997" name="Nature">
        <title>The nucleotide sequence of Saccharomyces cerevisiae chromosome XIII.</title>
        <authorList>
            <person name="Bowman S."/>
            <person name="Churcher C.M."/>
            <person name="Badcock K."/>
            <person name="Brown D."/>
            <person name="Chillingworth T."/>
            <person name="Connor R."/>
            <person name="Dedman K."/>
            <person name="Devlin K."/>
            <person name="Gentles S."/>
            <person name="Hamlin N."/>
            <person name="Hunt S."/>
            <person name="Jagels K."/>
            <person name="Lye G."/>
            <person name="Moule S."/>
            <person name="Odell C."/>
            <person name="Pearson D."/>
            <person name="Rajandream M.A."/>
            <person name="Rice P."/>
            <person name="Skelton J."/>
            <person name="Walsh S.V."/>
            <person name="Whitehead S."/>
            <person name="Barrell B.G."/>
        </authorList>
    </citation>
    <scope>NUCLEOTIDE SEQUENCE [LARGE SCALE GENOMIC DNA]</scope>
    <source>
        <strain>ATCC 204508 / S288c</strain>
    </source>
</reference>
<reference key="2">
    <citation type="journal article" date="2014" name="G3 (Bethesda)">
        <title>The reference genome sequence of Saccharomyces cerevisiae: Then and now.</title>
        <authorList>
            <person name="Engel S.R."/>
            <person name="Dietrich F.S."/>
            <person name="Fisk D.G."/>
            <person name="Binkley G."/>
            <person name="Balakrishnan R."/>
            <person name="Costanzo M.C."/>
            <person name="Dwight S.S."/>
            <person name="Hitz B.C."/>
            <person name="Karra K."/>
            <person name="Nash R.S."/>
            <person name="Weng S."/>
            <person name="Wong E.D."/>
            <person name="Lloyd P."/>
            <person name="Skrzypek M.S."/>
            <person name="Miyasato S.R."/>
            <person name="Simison M."/>
            <person name="Cherry J.M."/>
        </authorList>
    </citation>
    <scope>GENOME REANNOTATION</scope>
    <source>
        <strain>ATCC 204508 / S288c</strain>
    </source>
</reference>
<reference key="3">
    <citation type="journal article" date="2005" name="Mol. Cancer Res.">
        <title>Identification of mitogen-activated protein kinase signaling pathways that confer resistance to endoplasmic reticulum stress in Saccharomyces cerevisiae.</title>
        <authorList>
            <person name="Chen Y."/>
            <person name="Feldman D.E."/>
            <person name="Deng C."/>
            <person name="Brown J.A."/>
            <person name="De Giacomo A.F."/>
            <person name="Gaw A.F."/>
            <person name="Shi G."/>
            <person name="Le Q.T."/>
            <person name="Brown J.M."/>
            <person name="Koong A.C."/>
        </authorList>
    </citation>
    <scope>DISRUPTION PHENOTYPE</scope>
</reference>
<protein>
    <recommendedName>
        <fullName evidence="3">Putative uncharacterized protein YMR294W-A</fullName>
    </recommendedName>
</protein>
<gene>
    <name evidence="5" type="ordered locus">YMR294W-A</name>
</gene>
<comment type="disruption phenotype">
    <text evidence="2">Causes increased sensitivity to unfolded protein response (UPR)-inducing agents.</text>
</comment>
<comment type="miscellaneous">
    <text evidence="3">Partially overlaps YMR295C. Disruption phenotypes caused by deletion of this gene may also be a result of a defect in its overlapping gene.</text>
</comment>
<comment type="caution">
    <text evidence="4">Product of a dubious gene prediction unlikely to encode a functional protein. Because of that it is not part of the S.cerevisiae S288c complete/reference proteome set.</text>
</comment>
<dbReference type="EMBL" id="KJ412294">
    <property type="protein sequence ID" value="AHX39337.1"/>
    <property type="molecule type" value="Genomic_DNA"/>
</dbReference>
<dbReference type="PIR" id="S69850">
    <property type="entry name" value="S69850"/>
</dbReference>
<dbReference type="PaxDb" id="4932-YMR294W-A"/>
<dbReference type="EnsemblFungi" id="YMR294W-A_mRNA">
    <property type="protein sequence ID" value="YMR294W-A"/>
    <property type="gene ID" value="YMR294W-A"/>
</dbReference>
<dbReference type="AGR" id="SGD:S000004909"/>
<dbReference type="SGD" id="S000004909">
    <property type="gene designation" value="YMR294W-A"/>
</dbReference>
<dbReference type="HOGENOM" id="CLU_2074479_0_0_1"/>
<dbReference type="ChiTaRS" id="YMR294W-A">
    <property type="organism name" value="yeast"/>
</dbReference>